<accession>Q4URD2</accession>
<feature type="chain" id="PRO_0000224120" description="DNA-directed RNA polymerase subunit beta">
    <location>
        <begin position="1"/>
        <end position="1387"/>
    </location>
</feature>
<organism>
    <name type="scientific">Xanthomonas campestris pv. campestris (strain 8004)</name>
    <dbReference type="NCBI Taxonomy" id="314565"/>
    <lineage>
        <taxon>Bacteria</taxon>
        <taxon>Pseudomonadati</taxon>
        <taxon>Pseudomonadota</taxon>
        <taxon>Gammaproteobacteria</taxon>
        <taxon>Lysobacterales</taxon>
        <taxon>Lysobacteraceae</taxon>
        <taxon>Xanthomonas</taxon>
    </lineage>
</organism>
<protein>
    <recommendedName>
        <fullName evidence="1">DNA-directed RNA polymerase subunit beta</fullName>
        <shortName evidence="1">RNAP subunit beta</shortName>
        <ecNumber evidence="1">2.7.7.6</ecNumber>
    </recommendedName>
    <alternativeName>
        <fullName evidence="1">RNA polymerase subunit beta</fullName>
    </alternativeName>
    <alternativeName>
        <fullName evidence="1">Transcriptase subunit beta</fullName>
    </alternativeName>
</protein>
<comment type="function">
    <text evidence="1">DNA-dependent RNA polymerase catalyzes the transcription of DNA into RNA using the four ribonucleoside triphosphates as substrates.</text>
</comment>
<comment type="catalytic activity">
    <reaction evidence="1">
        <text>RNA(n) + a ribonucleoside 5'-triphosphate = RNA(n+1) + diphosphate</text>
        <dbReference type="Rhea" id="RHEA:21248"/>
        <dbReference type="Rhea" id="RHEA-COMP:14527"/>
        <dbReference type="Rhea" id="RHEA-COMP:17342"/>
        <dbReference type="ChEBI" id="CHEBI:33019"/>
        <dbReference type="ChEBI" id="CHEBI:61557"/>
        <dbReference type="ChEBI" id="CHEBI:140395"/>
        <dbReference type="EC" id="2.7.7.6"/>
    </reaction>
</comment>
<comment type="subunit">
    <text evidence="1">The RNAP catalytic core consists of 2 alpha, 1 beta, 1 beta' and 1 omega subunit. When a sigma factor is associated with the core the holoenzyme is formed, which can initiate transcription.</text>
</comment>
<comment type="similarity">
    <text evidence="1">Belongs to the RNA polymerase beta chain family.</text>
</comment>
<reference key="1">
    <citation type="journal article" date="2005" name="Genome Res.">
        <title>Comparative and functional genomic analyses of the pathogenicity of phytopathogen Xanthomonas campestris pv. campestris.</title>
        <authorList>
            <person name="Qian W."/>
            <person name="Jia Y."/>
            <person name="Ren S.-X."/>
            <person name="He Y.-Q."/>
            <person name="Feng J.-X."/>
            <person name="Lu L.-F."/>
            <person name="Sun Q."/>
            <person name="Ying G."/>
            <person name="Tang D.-J."/>
            <person name="Tang H."/>
            <person name="Wu W."/>
            <person name="Hao P."/>
            <person name="Wang L."/>
            <person name="Jiang B.-L."/>
            <person name="Zeng S."/>
            <person name="Gu W.-Y."/>
            <person name="Lu G."/>
            <person name="Rong L."/>
            <person name="Tian Y."/>
            <person name="Yao Z."/>
            <person name="Fu G."/>
            <person name="Chen B."/>
            <person name="Fang R."/>
            <person name="Qiang B."/>
            <person name="Chen Z."/>
            <person name="Zhao G.-P."/>
            <person name="Tang J.-L."/>
            <person name="He C."/>
        </authorList>
    </citation>
    <scope>NUCLEOTIDE SEQUENCE [LARGE SCALE GENOMIC DNA]</scope>
    <source>
        <strain>8004</strain>
    </source>
</reference>
<dbReference type="EC" id="2.7.7.6" evidence="1"/>
<dbReference type="EMBL" id="CP000050">
    <property type="protein sequence ID" value="AAY50391.1"/>
    <property type="molecule type" value="Genomic_DNA"/>
</dbReference>
<dbReference type="SMR" id="Q4URD2"/>
<dbReference type="KEGG" id="xcb:XC_3347"/>
<dbReference type="HOGENOM" id="CLU_000524_4_0_6"/>
<dbReference type="Proteomes" id="UP000000420">
    <property type="component" value="Chromosome"/>
</dbReference>
<dbReference type="GO" id="GO:0000428">
    <property type="term" value="C:DNA-directed RNA polymerase complex"/>
    <property type="evidence" value="ECO:0007669"/>
    <property type="project" value="UniProtKB-KW"/>
</dbReference>
<dbReference type="GO" id="GO:0003677">
    <property type="term" value="F:DNA binding"/>
    <property type="evidence" value="ECO:0007669"/>
    <property type="project" value="UniProtKB-UniRule"/>
</dbReference>
<dbReference type="GO" id="GO:0003899">
    <property type="term" value="F:DNA-directed RNA polymerase activity"/>
    <property type="evidence" value="ECO:0007669"/>
    <property type="project" value="UniProtKB-UniRule"/>
</dbReference>
<dbReference type="GO" id="GO:0032549">
    <property type="term" value="F:ribonucleoside binding"/>
    <property type="evidence" value="ECO:0007669"/>
    <property type="project" value="InterPro"/>
</dbReference>
<dbReference type="GO" id="GO:0006351">
    <property type="term" value="P:DNA-templated transcription"/>
    <property type="evidence" value="ECO:0007669"/>
    <property type="project" value="UniProtKB-UniRule"/>
</dbReference>
<dbReference type="CDD" id="cd00653">
    <property type="entry name" value="RNA_pol_B_RPB2"/>
    <property type="match status" value="1"/>
</dbReference>
<dbReference type="FunFam" id="2.40.50.100:FF:000006">
    <property type="entry name" value="DNA-directed RNA polymerase subunit beta"/>
    <property type="match status" value="1"/>
</dbReference>
<dbReference type="FunFam" id="2.40.50.150:FF:000001">
    <property type="entry name" value="DNA-directed RNA polymerase subunit beta"/>
    <property type="match status" value="1"/>
</dbReference>
<dbReference type="FunFam" id="3.90.1800.10:FF:000001">
    <property type="entry name" value="DNA-directed RNA polymerase subunit beta"/>
    <property type="match status" value="1"/>
</dbReference>
<dbReference type="Gene3D" id="2.40.50.100">
    <property type="match status" value="1"/>
</dbReference>
<dbReference type="Gene3D" id="2.40.50.150">
    <property type="match status" value="1"/>
</dbReference>
<dbReference type="Gene3D" id="3.90.1100.10">
    <property type="match status" value="2"/>
</dbReference>
<dbReference type="Gene3D" id="6.10.140.1670">
    <property type="match status" value="1"/>
</dbReference>
<dbReference type="Gene3D" id="2.30.150.10">
    <property type="entry name" value="DNA-directed RNA polymerase, beta subunit, external 1 domain"/>
    <property type="match status" value="1"/>
</dbReference>
<dbReference type="Gene3D" id="2.40.270.10">
    <property type="entry name" value="DNA-directed RNA polymerase, subunit 2, domain 6"/>
    <property type="match status" value="1"/>
</dbReference>
<dbReference type="Gene3D" id="3.90.1800.10">
    <property type="entry name" value="RNA polymerase alpha subunit dimerisation domain"/>
    <property type="match status" value="1"/>
</dbReference>
<dbReference type="Gene3D" id="3.90.1110.10">
    <property type="entry name" value="RNA polymerase Rpb2, domain 2"/>
    <property type="match status" value="1"/>
</dbReference>
<dbReference type="HAMAP" id="MF_01321">
    <property type="entry name" value="RNApol_bact_RpoB"/>
    <property type="match status" value="1"/>
</dbReference>
<dbReference type="InterPro" id="IPR042107">
    <property type="entry name" value="DNA-dir_RNA_pol_bsu_ext_1_sf"/>
</dbReference>
<dbReference type="InterPro" id="IPR019462">
    <property type="entry name" value="DNA-dir_RNA_pol_bsu_external_1"/>
</dbReference>
<dbReference type="InterPro" id="IPR015712">
    <property type="entry name" value="DNA-dir_RNA_pol_su2"/>
</dbReference>
<dbReference type="InterPro" id="IPR007120">
    <property type="entry name" value="DNA-dir_RNAP_su2_dom"/>
</dbReference>
<dbReference type="InterPro" id="IPR037033">
    <property type="entry name" value="DNA-dir_RNAP_su2_hyb_sf"/>
</dbReference>
<dbReference type="InterPro" id="IPR010243">
    <property type="entry name" value="RNA_pol_bsu_bac"/>
</dbReference>
<dbReference type="InterPro" id="IPR007121">
    <property type="entry name" value="RNA_pol_bsu_CS"/>
</dbReference>
<dbReference type="InterPro" id="IPR007644">
    <property type="entry name" value="RNA_pol_bsu_protrusion"/>
</dbReference>
<dbReference type="InterPro" id="IPR007642">
    <property type="entry name" value="RNA_pol_Rpb2_2"/>
</dbReference>
<dbReference type="InterPro" id="IPR037034">
    <property type="entry name" value="RNA_pol_Rpb2_2_sf"/>
</dbReference>
<dbReference type="InterPro" id="IPR007645">
    <property type="entry name" value="RNA_pol_Rpb2_3"/>
</dbReference>
<dbReference type="InterPro" id="IPR007641">
    <property type="entry name" value="RNA_pol_Rpb2_7"/>
</dbReference>
<dbReference type="InterPro" id="IPR014724">
    <property type="entry name" value="RNA_pol_RPB2_OB-fold"/>
</dbReference>
<dbReference type="NCBIfam" id="NF001616">
    <property type="entry name" value="PRK00405.1"/>
    <property type="match status" value="1"/>
</dbReference>
<dbReference type="NCBIfam" id="TIGR02013">
    <property type="entry name" value="rpoB"/>
    <property type="match status" value="1"/>
</dbReference>
<dbReference type="PANTHER" id="PTHR20856">
    <property type="entry name" value="DNA-DIRECTED RNA POLYMERASE I SUBUNIT 2"/>
    <property type="match status" value="1"/>
</dbReference>
<dbReference type="Pfam" id="PF04563">
    <property type="entry name" value="RNA_pol_Rpb2_1"/>
    <property type="match status" value="1"/>
</dbReference>
<dbReference type="Pfam" id="PF04561">
    <property type="entry name" value="RNA_pol_Rpb2_2"/>
    <property type="match status" value="3"/>
</dbReference>
<dbReference type="Pfam" id="PF04565">
    <property type="entry name" value="RNA_pol_Rpb2_3"/>
    <property type="match status" value="1"/>
</dbReference>
<dbReference type="Pfam" id="PF10385">
    <property type="entry name" value="RNA_pol_Rpb2_45"/>
    <property type="match status" value="1"/>
</dbReference>
<dbReference type="Pfam" id="PF00562">
    <property type="entry name" value="RNA_pol_Rpb2_6"/>
    <property type="match status" value="1"/>
</dbReference>
<dbReference type="Pfam" id="PF04560">
    <property type="entry name" value="RNA_pol_Rpb2_7"/>
    <property type="match status" value="1"/>
</dbReference>
<dbReference type="SUPFAM" id="SSF64484">
    <property type="entry name" value="beta and beta-prime subunits of DNA dependent RNA-polymerase"/>
    <property type="match status" value="1"/>
</dbReference>
<dbReference type="PROSITE" id="PS01166">
    <property type="entry name" value="RNA_POL_BETA"/>
    <property type="match status" value="1"/>
</dbReference>
<sequence>MEDLMTSYSFTEKKRIRKDFGKQRSILEVPFLLAIQVDSYREFLQEDVEPNKRKDLGLHAALKSVFPISSYSGNAALEYVGYKLGEPVFDERECRQRGMSYGAPLRVTVRLVIYDRESSTKAIKYVKEQEVYLGEIPLMTENGTFIVNGTERVIVSQLHRSPGVFFDHDRGKTHSSGKLLYSARIIPYRGSWLDFEFDPKDALFTRIDRRRKLPVSILLRALGYNNEEMLAEFFEINTFHINPDEGVQLELVPERLRGETLNFDLADGDKVIVEAGKRITARHVKQLEAAGVAALAVPDDYLVGRILSHDVVDGSTGELLANANDEISEDQLAAFRKAGVDAVGTLWVNDLDRGPYLSNTLRIDPTKTQLEALVEIYRMMRPGEPPTKEAAQNLFHNLFFTFERYDLSTVGRMKFNHRVGRKEVLGESVLYDKKYFAERNDEESKRLVAEHADTSDILEVIKVLTEIRNGRGVVDDIDHLGNRRVRSVGEMAENVFRVGLVRVERAVKERLSMAESEGLTPQELINAKPVAAAIKEFFGSSQLSRFMDQNNPLSEVTHKRRVSALGPGGLTRERAGFEVRDVHPTHYGRVCTIETPEGPNIGLINSLAVFARTNQYGFLETPYRKVLDGKVSDDVEYLSAIEENEYVIAQANALTDAKNMLTEQFVPCRFQGESLLKPPAEVHFMDVSPMQTVSVAAALVPFLEHDDANRALMGANMQRQAVPTLRSQKPLVGTGIERAVARDSGVTVNARRGGVIEQIDAARIVVKVNEAEIGGGTDAGVDIYNLIKYTRSNQNTCINQRPLVNVGDVIARGDVLADGPSTDIGELALGQNMLIAFMPWNGYNFEDSILLSERVVEEDRYTTIHIEELTCVARDTKLGPEEISADIPNVSEQALNRLDESGVVYIGAEVRAGDIMVGKVTPKGESQLTPEEKLLRAIFGEKASDVKDSSLRVPPGMDGTVIDVQVFTRDGIEKDKRARQIEESEIKRVKKDFDDQFRILEAAIYARLRSQIVGKVANGGPNLKKGDNVTDAYLDGLKKSDWFQLRMKDDDAADAIERAQKQIQAHEKEFEARFADKRGKITQGDDLAPGVLKMVKVFLAVKRRIQPGDKMAGRHGNKGVVSNVVPVEDMPYMATGEPVDIVLNPLGVPSRMNIGQILEVHLGWAAKGLGRKIQRMLEAQTAVSELRKFLDDIYNHDSAINAERVDLSQFSDEELLNLGKNLIDGVPMATPVFDGASEAEIKRMLELAELPQSGQTQLYDGRTGEAFDRKTTVGYMHYLKLNHLVDDKMHARSTGPYSLVTQQPLGGKAQFGGQRFGEMEVWALEAYGAAYTLQEMLTVKSDDVQGRNQMYKNIVDGEHEMVAGMPESFNVLVKEIRSLAINMELEE</sequence>
<keyword id="KW-0240">DNA-directed RNA polymerase</keyword>
<keyword id="KW-0548">Nucleotidyltransferase</keyword>
<keyword id="KW-0804">Transcription</keyword>
<keyword id="KW-0808">Transferase</keyword>
<gene>
    <name evidence="1" type="primary">rpoB</name>
    <name type="ordered locus">XC_3347</name>
</gene>
<name>RPOB_XANC8</name>
<proteinExistence type="inferred from homology"/>
<evidence type="ECO:0000255" key="1">
    <source>
        <dbReference type="HAMAP-Rule" id="MF_01321"/>
    </source>
</evidence>